<organism>
    <name type="scientific">Leptospira interrogans serogroup Icterohaemorrhagiae serovar Lai (strain 56601)</name>
    <dbReference type="NCBI Taxonomy" id="189518"/>
    <lineage>
        <taxon>Bacteria</taxon>
        <taxon>Pseudomonadati</taxon>
        <taxon>Spirochaetota</taxon>
        <taxon>Spirochaetia</taxon>
        <taxon>Leptospirales</taxon>
        <taxon>Leptospiraceae</taxon>
        <taxon>Leptospira</taxon>
    </lineage>
</organism>
<gene>
    <name evidence="1" type="primary">purM</name>
    <name type="ordered locus">LA_2935</name>
</gene>
<dbReference type="EC" id="6.3.3.1" evidence="1"/>
<dbReference type="EMBL" id="AE010300">
    <property type="protein sequence ID" value="AAN50133.2"/>
    <property type="status" value="ALT_INIT"/>
    <property type="molecule type" value="Genomic_DNA"/>
</dbReference>
<dbReference type="RefSeq" id="NP_713115.2">
    <property type="nucleotide sequence ID" value="NC_004342.2"/>
</dbReference>
<dbReference type="SMR" id="Q8F242"/>
<dbReference type="FunCoup" id="Q8F242">
    <property type="interactions" value="457"/>
</dbReference>
<dbReference type="STRING" id="189518.LA_2935"/>
<dbReference type="PaxDb" id="189518-LA_2935"/>
<dbReference type="EnsemblBacteria" id="AAN50133">
    <property type="protein sequence ID" value="AAN50133"/>
    <property type="gene ID" value="LA_2935"/>
</dbReference>
<dbReference type="KEGG" id="lil:LA_2935"/>
<dbReference type="PATRIC" id="fig|189518.3.peg.2914"/>
<dbReference type="HOGENOM" id="CLU_047116_0_0_12"/>
<dbReference type="InParanoid" id="Q8F242"/>
<dbReference type="OrthoDB" id="9802507at2"/>
<dbReference type="UniPathway" id="UPA00074">
    <property type="reaction ID" value="UER00129"/>
</dbReference>
<dbReference type="Proteomes" id="UP000001408">
    <property type="component" value="Chromosome I"/>
</dbReference>
<dbReference type="GO" id="GO:0005829">
    <property type="term" value="C:cytosol"/>
    <property type="evidence" value="ECO:0000318"/>
    <property type="project" value="GO_Central"/>
</dbReference>
<dbReference type="GO" id="GO:0005524">
    <property type="term" value="F:ATP binding"/>
    <property type="evidence" value="ECO:0007669"/>
    <property type="project" value="UniProtKB-KW"/>
</dbReference>
<dbReference type="GO" id="GO:0004637">
    <property type="term" value="F:phosphoribosylamine-glycine ligase activity"/>
    <property type="evidence" value="ECO:0000318"/>
    <property type="project" value="GO_Central"/>
</dbReference>
<dbReference type="GO" id="GO:0004641">
    <property type="term" value="F:phosphoribosylformylglycinamidine cyclo-ligase activity"/>
    <property type="evidence" value="ECO:0000318"/>
    <property type="project" value="GO_Central"/>
</dbReference>
<dbReference type="GO" id="GO:0006189">
    <property type="term" value="P:'de novo' IMP biosynthetic process"/>
    <property type="evidence" value="ECO:0007669"/>
    <property type="project" value="UniProtKB-UniRule"/>
</dbReference>
<dbReference type="GO" id="GO:0046084">
    <property type="term" value="P:adenine biosynthetic process"/>
    <property type="evidence" value="ECO:0000318"/>
    <property type="project" value="GO_Central"/>
</dbReference>
<dbReference type="GO" id="GO:0006164">
    <property type="term" value="P:purine nucleotide biosynthetic process"/>
    <property type="evidence" value="ECO:0000318"/>
    <property type="project" value="GO_Central"/>
</dbReference>
<dbReference type="CDD" id="cd02196">
    <property type="entry name" value="PurM"/>
    <property type="match status" value="1"/>
</dbReference>
<dbReference type="FunFam" id="3.30.1330.10:FF:000001">
    <property type="entry name" value="Phosphoribosylformylglycinamidine cyclo-ligase"/>
    <property type="match status" value="1"/>
</dbReference>
<dbReference type="FunFam" id="3.90.650.10:FF:000011">
    <property type="entry name" value="Phosphoribosylformylglycinamidine cyclo-ligase"/>
    <property type="match status" value="1"/>
</dbReference>
<dbReference type="Gene3D" id="3.90.650.10">
    <property type="entry name" value="PurM-like C-terminal domain"/>
    <property type="match status" value="1"/>
</dbReference>
<dbReference type="Gene3D" id="3.30.1330.10">
    <property type="entry name" value="PurM-like, N-terminal domain"/>
    <property type="match status" value="1"/>
</dbReference>
<dbReference type="HAMAP" id="MF_00741">
    <property type="entry name" value="AIRS"/>
    <property type="match status" value="1"/>
</dbReference>
<dbReference type="InterPro" id="IPR010918">
    <property type="entry name" value="PurM-like_C_dom"/>
</dbReference>
<dbReference type="InterPro" id="IPR036676">
    <property type="entry name" value="PurM-like_C_sf"/>
</dbReference>
<dbReference type="InterPro" id="IPR016188">
    <property type="entry name" value="PurM-like_N"/>
</dbReference>
<dbReference type="InterPro" id="IPR036921">
    <property type="entry name" value="PurM-like_N_sf"/>
</dbReference>
<dbReference type="InterPro" id="IPR004733">
    <property type="entry name" value="PurM_cligase"/>
</dbReference>
<dbReference type="NCBIfam" id="TIGR00878">
    <property type="entry name" value="purM"/>
    <property type="match status" value="1"/>
</dbReference>
<dbReference type="PANTHER" id="PTHR10520:SF12">
    <property type="entry name" value="TRIFUNCTIONAL PURINE BIOSYNTHETIC PROTEIN ADENOSINE-3"/>
    <property type="match status" value="1"/>
</dbReference>
<dbReference type="PANTHER" id="PTHR10520">
    <property type="entry name" value="TRIFUNCTIONAL PURINE BIOSYNTHETIC PROTEIN ADENOSINE-3-RELATED"/>
    <property type="match status" value="1"/>
</dbReference>
<dbReference type="Pfam" id="PF00586">
    <property type="entry name" value="AIRS"/>
    <property type="match status" value="1"/>
</dbReference>
<dbReference type="Pfam" id="PF02769">
    <property type="entry name" value="AIRS_C"/>
    <property type="match status" value="1"/>
</dbReference>
<dbReference type="SUPFAM" id="SSF56042">
    <property type="entry name" value="PurM C-terminal domain-like"/>
    <property type="match status" value="1"/>
</dbReference>
<dbReference type="SUPFAM" id="SSF55326">
    <property type="entry name" value="PurM N-terminal domain-like"/>
    <property type="match status" value="1"/>
</dbReference>
<reference key="1">
    <citation type="journal article" date="2003" name="Nature">
        <title>Unique physiological and pathogenic features of Leptospira interrogans revealed by whole-genome sequencing.</title>
        <authorList>
            <person name="Ren S.-X."/>
            <person name="Fu G."/>
            <person name="Jiang X.-G."/>
            <person name="Zeng R."/>
            <person name="Miao Y.-G."/>
            <person name="Xu H."/>
            <person name="Zhang Y.-X."/>
            <person name="Xiong H."/>
            <person name="Lu G."/>
            <person name="Lu L.-F."/>
            <person name="Jiang H.-Q."/>
            <person name="Jia J."/>
            <person name="Tu Y.-F."/>
            <person name="Jiang J.-X."/>
            <person name="Gu W.-Y."/>
            <person name="Zhang Y.-Q."/>
            <person name="Cai Z."/>
            <person name="Sheng H.-H."/>
            <person name="Yin H.-F."/>
            <person name="Zhang Y."/>
            <person name="Zhu G.-F."/>
            <person name="Wan M."/>
            <person name="Huang H.-L."/>
            <person name="Qian Z."/>
            <person name="Wang S.-Y."/>
            <person name="Ma W."/>
            <person name="Yao Z.-J."/>
            <person name="Shen Y."/>
            <person name="Qiang B.-Q."/>
            <person name="Xia Q.-C."/>
            <person name="Guo X.-K."/>
            <person name="Danchin A."/>
            <person name="Saint Girons I."/>
            <person name="Somerville R.L."/>
            <person name="Wen Y.-M."/>
            <person name="Shi M.-H."/>
            <person name="Chen Z."/>
            <person name="Xu J.-G."/>
            <person name="Zhao G.-P."/>
        </authorList>
    </citation>
    <scope>NUCLEOTIDE SEQUENCE [LARGE SCALE GENOMIC DNA]</scope>
    <source>
        <strain>56601</strain>
    </source>
</reference>
<accession>Q8F242</accession>
<feature type="chain" id="PRO_0000148220" description="Phosphoribosylformylglycinamidine cyclo-ligase">
    <location>
        <begin position="1"/>
        <end position="344"/>
    </location>
</feature>
<comment type="catalytic activity">
    <reaction evidence="1">
        <text>2-formamido-N(1)-(5-O-phospho-beta-D-ribosyl)acetamidine + ATP = 5-amino-1-(5-phospho-beta-D-ribosyl)imidazole + ADP + phosphate + H(+)</text>
        <dbReference type="Rhea" id="RHEA:23032"/>
        <dbReference type="ChEBI" id="CHEBI:15378"/>
        <dbReference type="ChEBI" id="CHEBI:30616"/>
        <dbReference type="ChEBI" id="CHEBI:43474"/>
        <dbReference type="ChEBI" id="CHEBI:137981"/>
        <dbReference type="ChEBI" id="CHEBI:147287"/>
        <dbReference type="ChEBI" id="CHEBI:456216"/>
        <dbReference type="EC" id="6.3.3.1"/>
    </reaction>
</comment>
<comment type="pathway">
    <text evidence="1">Purine metabolism; IMP biosynthesis via de novo pathway; 5-amino-1-(5-phospho-D-ribosyl)imidazole from N(2)-formyl-N(1)-(5-phospho-D-ribosyl)glycinamide: step 2/2.</text>
</comment>
<comment type="subcellular location">
    <subcellularLocation>
        <location evidence="1">Cytoplasm</location>
    </subcellularLocation>
</comment>
<comment type="similarity">
    <text evidence="1">Belongs to the AIR synthase family.</text>
</comment>
<comment type="sequence caution" evidence="2">
    <conflict type="erroneous initiation">
        <sequence resource="EMBL-CDS" id="AAN50133"/>
    </conflict>
    <text>Extended N-terminus.</text>
</comment>
<evidence type="ECO:0000255" key="1">
    <source>
        <dbReference type="HAMAP-Rule" id="MF_00741"/>
    </source>
</evidence>
<evidence type="ECO:0000305" key="2"/>
<proteinExistence type="inferred from homology"/>
<protein>
    <recommendedName>
        <fullName evidence="1">Phosphoribosylformylglycinamidine cyclo-ligase</fullName>
        <ecNumber evidence="1">6.3.3.1</ecNumber>
    </recommendedName>
    <alternativeName>
        <fullName evidence="1">AIR synthase</fullName>
    </alternativeName>
    <alternativeName>
        <fullName evidence="1">AIRS</fullName>
    </alternativeName>
    <alternativeName>
        <fullName evidence="1">Phosphoribosyl-aminoimidazole synthetase</fullName>
    </alternativeName>
</protein>
<keyword id="KW-0067">ATP-binding</keyword>
<keyword id="KW-0963">Cytoplasm</keyword>
<keyword id="KW-0436">Ligase</keyword>
<keyword id="KW-0547">Nucleotide-binding</keyword>
<keyword id="KW-0658">Purine biosynthesis</keyword>
<keyword id="KW-1185">Reference proteome</keyword>
<name>PUR5_LEPIN</name>
<sequence length="344" mass="37761">MEEKITYKNAGVDTEKGREFIQKIKRNVESTHGPRVIGGLGGFAGAYDVSVLKKYKHPILLSGTDGVGTKIELARLLKIYNTIGIDLVAMCVNDILVCGGEPLFFLDYIACGKLDPEKMDQIVSGIVQGCKMSNASLLGGETAEHPGTMKEDEFDLAGFVVGAVEKDSMIDGSTIRSGDKILGLESSGPHSNGFSLIRKLLLKEGKYLPTDPQQVKFLKDYALKPTRIYVSSILKLLQQVSVKGMVHITGGGYQENVPRILPQGTQSKFFKEKIPSGYFFEKIKKDHKIEELELFATFNMGIGYMVIVSEENAELAKKIMESSGEVVHEIGEIVSGNKEEVQFV</sequence>